<evidence type="ECO:0000250" key="1"/>
<evidence type="ECO:0000256" key="2">
    <source>
        <dbReference type="SAM" id="MobiDB-lite"/>
    </source>
</evidence>
<evidence type="ECO:0000269" key="3">
    <source>
    </source>
</evidence>
<evidence type="ECO:0000269" key="4">
    <source>
    </source>
</evidence>
<evidence type="ECO:0000305" key="5"/>
<sequence>MSEASGRAAGNEMPAKKQKLSSDENSNPELSGDENDDSVSIESGTNTERPDTPTNAANAPGRKGWGKGKWKSKKCKYSFKCVNSLKEDHNQPLFGVQFNWHSKEGDPLVFATVGSNRVTLYECHPQGDIRLLQSYVDADADENFYTCAWTYDSNTSHPLLAVAGSRGIIRIINPITMQCIKHYVGHGNAINELKFHPRDPNLLLSVSKDHALRLWNIQTDTLVAIFGGVEGHRDEVLSADYDLLGEKIMSCGMDHSLKLWRINSLRMKTAIKESYDYNPNKTNRPFVSQKVHFPDFSTRDIHRNYVDCVRWLGDLILSKSCENAIVCWKPGKMEDDIEKIKASESNVTILGRFDYSQCDIWYMRFSMDFWQKMLALGNQVGKLYVWDLEVEDPHKAKCTTLTYPKCASAIRQTSFSRDSSVLIAVCDDSTIWRWDRLR</sequence>
<reference key="1">
    <citation type="submission" date="2001-12" db="EMBL/GenBank/DDBJ databases">
        <authorList>
            <consortium name="The Cancer Genome Anatomy Project (CGAP) at the National Cancer Institute"/>
        </authorList>
    </citation>
    <scope>NUCLEOTIDE SEQUENCE [LARGE SCALE MRNA] OF 1-174</scope>
    <source>
        <tissue>Embryo</tissue>
    </source>
</reference>
<reference key="2">
    <citation type="journal article" date="2001" name="Mol. Cell. Biol.">
        <title>The polycomb group protein EED interacts with YY1, and both proteins induce neural tissue in Xenopus embryos.</title>
        <authorList>
            <person name="Satijn D.P.E."/>
            <person name="Hamer K.M."/>
            <person name="den Blaauwen J."/>
            <person name="Otte A.P."/>
        </authorList>
    </citation>
    <scope>NUCLEOTIDE SEQUENCE [MRNA] OF 3-438</scope>
    <scope>PUTATIVE FUNCTION</scope>
    <scope>INTERACTION WITH YY1</scope>
    <scope>DEVELOPMENTAL STAGE</scope>
</reference>
<reference key="3">
    <citation type="journal article" date="2002" name="DNA Seq.">
        <title>Characterization of Xenopus EED pseudogene, a Polycomb group gene.</title>
        <authorList>
            <person name="Cho J.K."/>
            <person name="Chung H.M."/>
        </authorList>
    </citation>
    <scope>NUCLEOTIDE SEQUENCE [MRNA] OF 3-438</scope>
    <scope>DEVELOPMENTAL STAGE</scope>
</reference>
<reference key="4">
    <citation type="submission" date="2004-07" db="EMBL/GenBank/DDBJ databases">
        <authorList>
            <consortium name="NIH - Xenopus Gene Collection (XGC) project"/>
        </authorList>
    </citation>
    <scope>NUCLEOTIDE SEQUENCE [LARGE SCALE MRNA] OF 12-438</scope>
    <source>
        <tissue>Embryo</tissue>
    </source>
</reference>
<accession>Q6AZS2</accession>
<accession>Q8AV63</accession>
<accession>Q8AV64</accession>
<accession>Q90YL5</accession>
<comment type="function">
    <text evidence="1">Polycomb group (PcG) protein. Component of the prc2/eed-ezh2 complex, which methylates 'Lys-9' and 'Lys-27' of histone H3, leading to transcriptional repression of the affected target gene (By similarity). May play a role in neural induction.</text>
</comment>
<comment type="subunit">
    <text evidence="1 3">Component of the prc2/eed-ezh2 complex (By similarity). Can interact with ezh2, hdac1 and taf9 (By similarity). Interacts with yy1.</text>
</comment>
<comment type="subcellular location">
    <subcellularLocation>
        <location evidence="1">Nucleus</location>
    </subcellularLocation>
</comment>
<comment type="developmental stage">
    <text evidence="3 4">Maternally and zygotically expressed. Expression decreases between late blastula and early gastrula.</text>
</comment>
<comment type="similarity">
    <text evidence="5">Belongs to the WD repeat ESC family.</text>
</comment>
<comment type="sequence caution" evidence="5">
    <conflict type="erroneous initiation">
        <sequence resource="EMBL-CDS" id="AAH77425"/>
    </conflict>
</comment>
<comment type="sequence caution" evidence="5">
    <conflict type="erroneous initiation">
        <sequence resource="EMBL-CDS" id="AAK59991"/>
    </conflict>
</comment>
<comment type="sequence caution" evidence="5">
    <conflict type="erroneous initiation">
        <sequence resource="EMBL-CDS" id="AAN64881"/>
    </conflict>
</comment>
<dbReference type="EMBL" id="BM179864">
    <property type="status" value="NOT_ANNOTATED_CDS"/>
    <property type="molecule type" value="mRNA"/>
</dbReference>
<dbReference type="EMBL" id="AY034136">
    <property type="protein sequence ID" value="AAK59991.1"/>
    <property type="status" value="ALT_INIT"/>
    <property type="molecule type" value="mRNA"/>
</dbReference>
<dbReference type="EMBL" id="AF460180">
    <property type="protein sequence ID" value="AAN64881.1"/>
    <property type="status" value="ALT_INIT"/>
    <property type="molecule type" value="mRNA"/>
</dbReference>
<dbReference type="EMBL" id="AF375048">
    <property type="protein sequence ID" value="AAN75584.1"/>
    <property type="molecule type" value="mRNA"/>
</dbReference>
<dbReference type="EMBL" id="BC077425">
    <property type="protein sequence ID" value="AAH77425.1"/>
    <property type="status" value="ALT_INIT"/>
    <property type="molecule type" value="mRNA"/>
</dbReference>
<dbReference type="RefSeq" id="NP_001082354.1">
    <property type="nucleotide sequence ID" value="NM_001088885.1"/>
</dbReference>
<dbReference type="SMR" id="Q6AZS2"/>
<dbReference type="DNASU" id="398420"/>
<dbReference type="GeneID" id="398420"/>
<dbReference type="KEGG" id="xla:398420"/>
<dbReference type="AGR" id="Xenbase:XB-GENE-491484"/>
<dbReference type="CTD" id="398420"/>
<dbReference type="Xenbase" id="XB-GENE-491484">
    <property type="gene designation" value="eed.S"/>
</dbReference>
<dbReference type="OrthoDB" id="7318948at2759"/>
<dbReference type="Proteomes" id="UP000186698">
    <property type="component" value="Chromosome 2S"/>
</dbReference>
<dbReference type="Bgee" id="398420">
    <property type="expression patterns" value="Expressed in egg cell and 19 other cell types or tissues"/>
</dbReference>
<dbReference type="GO" id="GO:0035098">
    <property type="term" value="C:ESC/E(Z) complex"/>
    <property type="evidence" value="ECO:0000250"/>
    <property type="project" value="UniProtKB"/>
</dbReference>
<dbReference type="GO" id="GO:0031507">
    <property type="term" value="P:heterochromatin formation"/>
    <property type="evidence" value="ECO:0000318"/>
    <property type="project" value="GO_Central"/>
</dbReference>
<dbReference type="GO" id="GO:0000122">
    <property type="term" value="P:negative regulation of transcription by RNA polymerase II"/>
    <property type="evidence" value="ECO:0000318"/>
    <property type="project" value="GO_Central"/>
</dbReference>
<dbReference type="FunFam" id="2.130.10.10:FF:000056">
    <property type="entry name" value="Polycomb protein eed"/>
    <property type="match status" value="1"/>
</dbReference>
<dbReference type="Gene3D" id="2.130.10.10">
    <property type="entry name" value="YVTN repeat-like/Quinoprotein amine dehydrogenase"/>
    <property type="match status" value="1"/>
</dbReference>
<dbReference type="InterPro" id="IPR051243">
    <property type="entry name" value="PcG_WD-repeat"/>
</dbReference>
<dbReference type="InterPro" id="IPR015943">
    <property type="entry name" value="WD40/YVTN_repeat-like_dom_sf"/>
</dbReference>
<dbReference type="InterPro" id="IPR019775">
    <property type="entry name" value="WD40_repeat_CS"/>
</dbReference>
<dbReference type="InterPro" id="IPR036322">
    <property type="entry name" value="WD40_repeat_dom_sf"/>
</dbReference>
<dbReference type="InterPro" id="IPR001680">
    <property type="entry name" value="WD40_rpt"/>
</dbReference>
<dbReference type="PANTHER" id="PTHR10253">
    <property type="entry name" value="POLYCOMB PROTEIN"/>
    <property type="match status" value="1"/>
</dbReference>
<dbReference type="Pfam" id="PF00400">
    <property type="entry name" value="WD40"/>
    <property type="match status" value="2"/>
</dbReference>
<dbReference type="SMART" id="SM00320">
    <property type="entry name" value="WD40"/>
    <property type="match status" value="6"/>
</dbReference>
<dbReference type="SUPFAM" id="SSF50978">
    <property type="entry name" value="WD40 repeat-like"/>
    <property type="match status" value="1"/>
</dbReference>
<dbReference type="PROSITE" id="PS00678">
    <property type="entry name" value="WD_REPEATS_1"/>
    <property type="match status" value="1"/>
</dbReference>
<dbReference type="PROSITE" id="PS50082">
    <property type="entry name" value="WD_REPEATS_2"/>
    <property type="match status" value="2"/>
</dbReference>
<dbReference type="PROSITE" id="PS50294">
    <property type="entry name" value="WD_REPEATS_REGION"/>
    <property type="match status" value="1"/>
</dbReference>
<protein>
    <recommendedName>
        <fullName>Polycomb protein eed-B</fullName>
        <shortName>Xeed-B</shortName>
    </recommendedName>
    <alternativeName>
        <fullName>psXEED</fullName>
    </alternativeName>
</protein>
<keyword id="KW-0156">Chromatin regulator</keyword>
<keyword id="KW-0539">Nucleus</keyword>
<keyword id="KW-1185">Reference proteome</keyword>
<keyword id="KW-0677">Repeat</keyword>
<keyword id="KW-0678">Repressor</keyword>
<keyword id="KW-0804">Transcription</keyword>
<keyword id="KW-0805">Transcription regulation</keyword>
<keyword id="KW-0853">WD repeat</keyword>
<proteinExistence type="evidence at protein level"/>
<organism>
    <name type="scientific">Xenopus laevis</name>
    <name type="common">African clawed frog</name>
    <dbReference type="NCBI Taxonomy" id="8355"/>
    <lineage>
        <taxon>Eukaryota</taxon>
        <taxon>Metazoa</taxon>
        <taxon>Chordata</taxon>
        <taxon>Craniata</taxon>
        <taxon>Vertebrata</taxon>
        <taxon>Euteleostomi</taxon>
        <taxon>Amphibia</taxon>
        <taxon>Batrachia</taxon>
        <taxon>Anura</taxon>
        <taxon>Pipoidea</taxon>
        <taxon>Pipidae</taxon>
        <taxon>Xenopodinae</taxon>
        <taxon>Xenopus</taxon>
        <taxon>Xenopus</taxon>
    </lineage>
</organism>
<gene>
    <name type="primary">eed-b</name>
</gene>
<name>EEDB_XENLA</name>
<feature type="chain" id="PRO_0000343730" description="Polycomb protein eed-B">
    <location>
        <begin position="1"/>
        <end position="438"/>
    </location>
</feature>
<feature type="repeat" description="WD 1">
    <location>
        <begin position="88"/>
        <end position="131"/>
    </location>
</feature>
<feature type="repeat" description="WD 2">
    <location>
        <begin position="139"/>
        <end position="182"/>
    </location>
</feature>
<feature type="repeat" description="WD 3">
    <location>
        <begin position="185"/>
        <end position="225"/>
    </location>
</feature>
<feature type="repeat" description="WD 4">
    <location>
        <begin position="231"/>
        <end position="270"/>
    </location>
</feature>
<feature type="repeat" description="WD 5">
    <location>
        <begin position="301"/>
        <end position="338"/>
    </location>
</feature>
<feature type="repeat" description="WD 6">
    <location>
        <begin position="356"/>
        <end position="396"/>
    </location>
</feature>
<feature type="repeat" description="WD 7">
    <location>
        <begin position="405"/>
        <end position="438"/>
    </location>
</feature>
<feature type="region of interest" description="Disordered" evidence="2">
    <location>
        <begin position="1"/>
        <end position="70"/>
    </location>
</feature>
<feature type="compositionally biased region" description="Polar residues" evidence="2">
    <location>
        <begin position="40"/>
        <end position="57"/>
    </location>
</feature>
<feature type="sequence conflict" description="In Ref. 3; AAN64881." evidence="5" ref="3">
    <original>C</original>
    <variation>G</variation>
    <location>
        <position position="308"/>
    </location>
</feature>
<feature type="sequence conflict" description="In Ref. 2; AAK59991." evidence="5" ref="2">
    <original>E</original>
    <variation>K</variation>
    <location>
        <position position="391"/>
    </location>
</feature>
<feature type="sequence conflict" description="In Ref. 3; AAN75584." evidence="5" ref="3">
    <original>C</original>
    <variation>R</variation>
    <location>
        <position position="398"/>
    </location>
</feature>